<feature type="signal peptide">
    <location>
        <begin position="1"/>
        <end position="21"/>
    </location>
</feature>
<feature type="propeptide" id="PRO_0000027084">
    <location>
        <begin position="22"/>
        <end position="121"/>
    </location>
</feature>
<feature type="chain" id="PRO_0000027085" description="Alkaline protease 1">
    <location>
        <begin position="122"/>
        <end position="403"/>
    </location>
</feature>
<feature type="domain" description="Inhibitor I9" evidence="1">
    <location>
        <begin position="36"/>
        <end position="120"/>
    </location>
</feature>
<feature type="domain" description="Peptidase S8" evidence="2">
    <location>
        <begin position="130"/>
        <end position="403"/>
    </location>
</feature>
<feature type="active site" description="Charge relay system" evidence="2">
    <location>
        <position position="162"/>
    </location>
</feature>
<feature type="active site" description="Charge relay system" evidence="2">
    <location>
        <position position="193"/>
    </location>
</feature>
<feature type="active site" description="Charge relay system" evidence="2">
    <location>
        <position position="349"/>
    </location>
</feature>
<feature type="glycosylation site" description="N-linked (GlcNAc...) asparagine" evidence="1">
    <location>
        <position position="253"/>
    </location>
</feature>
<comment type="function">
    <text evidence="3">Secreted alkaline protease that allows assimilation of proteinaceous substrates.</text>
</comment>
<comment type="catalytic activity">
    <reaction>
        <text>Hydrolysis of proteins with broad specificity, and of Bz-Arg-OEt &gt; Ac-Tyr-OEt. Does not hydrolyze peptide amides.</text>
        <dbReference type="EC" id="3.4.21.63"/>
    </reaction>
</comment>
<comment type="biophysicochemical properties">
    <phDependence>
        <text evidence="3">Optimum pH is 9.</text>
    </phDependence>
    <temperatureDependence>
        <text evidence="3">Optimum temperature is 40 degrees Celsius.</text>
    </temperatureDependence>
</comment>
<comment type="subcellular location">
    <subcellularLocation>
        <location>Secreted</location>
    </subcellularLocation>
</comment>
<comment type="induction">
    <text evidence="4">Expression is controlled by the prtT transcription factor.</text>
</comment>
<comment type="similarity">
    <text evidence="5">Belongs to the peptidase S8 family.</text>
</comment>
<protein>
    <recommendedName>
        <fullName>Alkaline protease 1</fullName>
        <shortName>ALP</shortName>
        <ecNumber>3.4.21.63</ecNumber>
    </recommendedName>
    <alternativeName>
        <fullName>Aspergillopeptidase B</fullName>
    </alternativeName>
    <alternativeName>
        <fullName>Aspergillus proteinase B</fullName>
    </alternativeName>
    <alternativeName>
        <fullName>Elastase</fullName>
    </alternativeName>
    <alternativeName>
        <fullName>Elastinolytic serine proteinase</fullName>
    </alternativeName>
    <alternativeName>
        <fullName>Oryzin</fullName>
    </alternativeName>
</protein>
<evidence type="ECO:0000255" key="1"/>
<evidence type="ECO:0000255" key="2">
    <source>
        <dbReference type="PROSITE-ProRule" id="PRU01240"/>
    </source>
</evidence>
<evidence type="ECO:0000269" key="3">
    <source>
    </source>
</evidence>
<evidence type="ECO:0000269" key="4">
    <source>
    </source>
</evidence>
<evidence type="ECO:0000305" key="5"/>
<accession>P12547</accession>
<accession>Q2UJX3</accession>
<reference key="1">
    <citation type="journal article" date="1989" name="Mol. Gen. Genet.">
        <title>A full length cDNA clone for the alkaline protease from Aspergillus oryzae: structural analysis and expression in Saccharomyces cerevisiae.</title>
        <authorList>
            <person name="Tatsumi H."/>
            <person name="Ogawa Y."/>
            <person name="Murakami S."/>
            <person name="Ishida Y."/>
            <person name="Murakami K."/>
            <person name="Masaki A."/>
            <person name="Kawabe H."/>
            <person name="Arimura H."/>
            <person name="Nakano E."/>
            <person name="Motai H."/>
        </authorList>
    </citation>
    <scope>NUCLEOTIDE SEQUENCE [MRNA]</scope>
    <source>
        <strain>ATCC 20386 / 460</strain>
    </source>
</reference>
<reference key="2">
    <citation type="journal article" date="1991" name="Gene">
        <title>Cloning and selective overexpression of an alkaline protease-encoding gene from Aspergillus oryzae.</title>
        <authorList>
            <person name="Cheevadhanarak S."/>
            <person name="Renno D.V."/>
            <person name="Saunders G."/>
            <person name="Holt G."/>
        </authorList>
    </citation>
    <scope>NUCLEOTIDE SEQUENCE [GENOMIC DNA]</scope>
    <source>
        <strain>U 212</strain>
    </source>
</reference>
<reference key="3">
    <citation type="journal article" date="1991" name="Agric. Biol. Chem.">
        <title>Isolation and characterization of the alkaline protease gene of Aspergillus oryzae.</title>
        <authorList>
            <person name="Murakami K."/>
            <person name="Ishida Y."/>
            <person name="Masaki A."/>
            <person name="Tatsumi H."/>
            <person name="Murakami S."/>
            <person name="Nakano E."/>
            <person name="Motai H."/>
            <person name="Kawabe H."/>
            <person name="Arimura H."/>
        </authorList>
    </citation>
    <scope>NUCLEOTIDE SEQUENCE [GENOMIC DNA]</scope>
    <source>
        <strain>ATCC 20386 / 460</strain>
    </source>
</reference>
<reference key="4">
    <citation type="journal article" date="2005" name="Nature">
        <title>Genome sequencing and analysis of Aspergillus oryzae.</title>
        <authorList>
            <person name="Machida M."/>
            <person name="Asai K."/>
            <person name="Sano M."/>
            <person name="Tanaka T."/>
            <person name="Kumagai T."/>
            <person name="Terai G."/>
            <person name="Kusumoto K."/>
            <person name="Arima T."/>
            <person name="Akita O."/>
            <person name="Kashiwagi Y."/>
            <person name="Abe K."/>
            <person name="Gomi K."/>
            <person name="Horiuchi H."/>
            <person name="Kitamoto K."/>
            <person name="Kobayashi T."/>
            <person name="Takeuchi M."/>
            <person name="Denning D.W."/>
            <person name="Galagan J.E."/>
            <person name="Nierman W.C."/>
            <person name="Yu J."/>
            <person name="Archer D.B."/>
            <person name="Bennett J.W."/>
            <person name="Bhatnagar D."/>
            <person name="Cleveland T.E."/>
            <person name="Fedorova N.D."/>
            <person name="Gotoh O."/>
            <person name="Horikawa H."/>
            <person name="Hosoyama A."/>
            <person name="Ichinomiya M."/>
            <person name="Igarashi R."/>
            <person name="Iwashita K."/>
            <person name="Juvvadi P.R."/>
            <person name="Kato M."/>
            <person name="Kato Y."/>
            <person name="Kin T."/>
            <person name="Kokubun A."/>
            <person name="Maeda H."/>
            <person name="Maeyama N."/>
            <person name="Maruyama J."/>
            <person name="Nagasaki H."/>
            <person name="Nakajima T."/>
            <person name="Oda K."/>
            <person name="Okada K."/>
            <person name="Paulsen I."/>
            <person name="Sakamoto K."/>
            <person name="Sawano T."/>
            <person name="Takahashi M."/>
            <person name="Takase K."/>
            <person name="Terabayashi Y."/>
            <person name="Wortman J.R."/>
            <person name="Yamada O."/>
            <person name="Yamagata Y."/>
            <person name="Anazawa H."/>
            <person name="Hata Y."/>
            <person name="Koide Y."/>
            <person name="Komori T."/>
            <person name="Koyama Y."/>
            <person name="Minetoki T."/>
            <person name="Suharnan S."/>
            <person name="Tanaka A."/>
            <person name="Isono K."/>
            <person name="Kuhara S."/>
            <person name="Ogasawara N."/>
            <person name="Kikuchi H."/>
        </authorList>
    </citation>
    <scope>NUCLEOTIDE SEQUENCE [LARGE SCALE GENOMIC DNA]</scope>
    <source>
        <strain>ATCC 42149 / RIB 40</strain>
    </source>
</reference>
<reference key="5">
    <citation type="journal article" date="1988" name="Agric. Biol. Chem.">
        <title>Cloning and sequencing of the alkaline protease cDNA from Aspergillus oryzae.</title>
        <authorList>
            <person name="Tatsumi H."/>
            <person name="Ohsawa M."/>
            <person name="Tsuji R.F."/>
            <person name="Murakami S."/>
            <person name="Nakano E."/>
            <person name="Motai H."/>
            <person name="Masaki A."/>
            <person name="Ishida Y."/>
            <person name="Murakami K."/>
            <person name="Kawabe H."/>
            <person name="Arimura H."/>
        </authorList>
    </citation>
    <scope>NUCLEOTIDE SEQUENCE [MRNA] OF 122-403</scope>
    <scope>PARTIAL PROTEIN SEQUENCE</scope>
</reference>
<reference key="6">
    <citation type="journal article" date="2008" name="Fungal Genet. Biol.">
        <title>Characterization of the Aspergillus niger prtT, a unique regulator of extracellular protease encoding genes.</title>
        <authorList>
            <person name="Punt P.J."/>
            <person name="Schuren F.H."/>
            <person name="Lehmbeck J."/>
            <person name="Christensen T."/>
            <person name="Hjort C."/>
            <person name="van den Hondel C.A."/>
        </authorList>
    </citation>
    <scope>INDUCTION</scope>
</reference>
<reference key="7">
    <citation type="journal article" date="2008" name="Protein Expr. Purif.">
        <title>High-level expression, purification and characterization of recombinant Aspergillus oryzae alkaline protease in Pichia pastoris.</title>
        <authorList>
            <person name="Guo J.P."/>
            <person name="Ma Y."/>
        </authorList>
    </citation>
    <scope>FUNCTION</scope>
    <scope>BIOPHYSICOCHEMICAL PROPERTIES</scope>
</reference>
<sequence length="403" mass="42571">MQSIKRTLLLLGAILPAVLGAPVQETRRAAEKLPGKYIVTFKPGIDEAKIQEHTTWATNIHQRSLERRGATGGDLPVGIERNYKINKFAAYAGSFDDATIEEIRKNEDVAYVEEDQIYYLDGLTTQKSAPWGLGSISHKGQQSTDYIYDTSAGEGTYAYVVDSGVNVDHEEFEGRASKAYNAAGGQHVDSIGHGTHVSGTIAGKTYGIAKKASILSVKVFQGESSSTSVILDGFNWAANDIVSKKRTSKAAINMSLGGGYSKAFNDAVENAFEQGVLSVVAAGNENSDAGQTSPASAPDAITVAAIQKSNNRASFSNFGKVVDVFAPGQDILSAWIGSSSATNTISGTSMATPHIVGLSLYLAALENLDGPAAVTKRIKELATKDVVKDVKGSPNLLAYNGNA</sequence>
<organism>
    <name type="scientific">Aspergillus oryzae (strain ATCC 42149 / RIB 40)</name>
    <name type="common">Yellow koji mold</name>
    <dbReference type="NCBI Taxonomy" id="510516"/>
    <lineage>
        <taxon>Eukaryota</taxon>
        <taxon>Fungi</taxon>
        <taxon>Dikarya</taxon>
        <taxon>Ascomycota</taxon>
        <taxon>Pezizomycotina</taxon>
        <taxon>Eurotiomycetes</taxon>
        <taxon>Eurotiomycetidae</taxon>
        <taxon>Eurotiales</taxon>
        <taxon>Aspergillaceae</taxon>
        <taxon>Aspergillus</taxon>
        <taxon>Aspergillus subgen. Circumdati</taxon>
    </lineage>
</organism>
<proteinExistence type="evidence at protein level"/>
<name>ORYZ_ASPOR</name>
<keyword id="KW-0903">Direct protein sequencing</keyword>
<keyword id="KW-0325">Glycoprotein</keyword>
<keyword id="KW-0378">Hydrolase</keyword>
<keyword id="KW-0645">Protease</keyword>
<keyword id="KW-1185">Reference proteome</keyword>
<keyword id="KW-0964">Secreted</keyword>
<keyword id="KW-0720">Serine protease</keyword>
<keyword id="KW-0732">Signal</keyword>
<keyword id="KW-0865">Zymogen</keyword>
<gene>
    <name type="primary">alp1</name>
    <name type="synonym">alk1</name>
    <name type="synonym">alp</name>
    <name type="synonym">alpA</name>
    <name type="ORF">AO090003001036</name>
</gene>
<dbReference type="EC" id="3.4.21.63"/>
<dbReference type="EMBL" id="X17561">
    <property type="protein sequence ID" value="CAA35594.1"/>
    <property type="molecule type" value="mRNA"/>
</dbReference>
<dbReference type="EMBL" id="S75278">
    <property type="protein sequence ID" value="AAB20819.1"/>
    <property type="molecule type" value="Genomic_DNA"/>
</dbReference>
<dbReference type="EMBL" id="X54726">
    <property type="protein sequence ID" value="CAA38527.2"/>
    <property type="molecule type" value="Genomic_DNA"/>
</dbReference>
<dbReference type="EMBL" id="S79617">
    <property type="protein sequence ID" value="AAC60533.1"/>
    <property type="molecule type" value="Genomic_DNA"/>
</dbReference>
<dbReference type="EMBL" id="D10062">
    <property type="protein sequence ID" value="BAA00951.1"/>
    <property type="molecule type" value="Genomic_DNA"/>
</dbReference>
<dbReference type="EMBL" id="BA000050">
    <property type="protein sequence ID" value="BAE58142.1"/>
    <property type="molecule type" value="Genomic_DNA"/>
</dbReference>
<dbReference type="EMBL" id="D00350">
    <property type="protein sequence ID" value="BAA00258.1"/>
    <property type="molecule type" value="mRNA"/>
</dbReference>
<dbReference type="PIR" id="JU0278">
    <property type="entry name" value="SUASO"/>
</dbReference>
<dbReference type="RefSeq" id="XP_001820144.1">
    <property type="nucleotide sequence ID" value="XM_001820092.2"/>
</dbReference>
<dbReference type="SMR" id="P12547"/>
<dbReference type="STRING" id="510516.P12547"/>
<dbReference type="Allergome" id="3132">
    <property type="allergen name" value="Asp o 13.0101"/>
</dbReference>
<dbReference type="Allergome" id="84">
    <property type="allergen name" value="Asp o 13"/>
</dbReference>
<dbReference type="MEROPS" id="S08.053"/>
<dbReference type="GlyCosmos" id="P12547">
    <property type="glycosylation" value="1 site, No reported glycans"/>
</dbReference>
<dbReference type="EnsemblFungi" id="BAE58142">
    <property type="protein sequence ID" value="BAE58142"/>
    <property type="gene ID" value="AO090003001036"/>
</dbReference>
<dbReference type="GeneID" id="5992127"/>
<dbReference type="KEGG" id="aor:AO090003001036"/>
<dbReference type="VEuPathDB" id="FungiDB:AO090003001036"/>
<dbReference type="HOGENOM" id="CLU_011263_1_4_1"/>
<dbReference type="OMA" id="LRWENTR"/>
<dbReference type="OrthoDB" id="83080at5052"/>
<dbReference type="BRENDA" id="3.4.21.63">
    <property type="organism ID" value="522"/>
</dbReference>
<dbReference type="Proteomes" id="UP000006564">
    <property type="component" value="Chromosome 2"/>
</dbReference>
<dbReference type="GO" id="GO:0005576">
    <property type="term" value="C:extracellular region"/>
    <property type="evidence" value="ECO:0000314"/>
    <property type="project" value="UniProtKB"/>
</dbReference>
<dbReference type="GO" id="GO:0004252">
    <property type="term" value="F:serine-type endopeptidase activity"/>
    <property type="evidence" value="ECO:0000314"/>
    <property type="project" value="UniProtKB"/>
</dbReference>
<dbReference type="GO" id="GO:0006508">
    <property type="term" value="P:proteolysis"/>
    <property type="evidence" value="ECO:0007669"/>
    <property type="project" value="UniProtKB-KW"/>
</dbReference>
<dbReference type="CDD" id="cd04077">
    <property type="entry name" value="Peptidases_S8_PCSK9_ProteinaseK_like"/>
    <property type="match status" value="1"/>
</dbReference>
<dbReference type="FunFam" id="3.30.70.80:FF:000008">
    <property type="entry name" value="Alkaline protease 1"/>
    <property type="match status" value="1"/>
</dbReference>
<dbReference type="FunFam" id="3.40.50.200:FF:000014">
    <property type="entry name" value="Proteinase K"/>
    <property type="match status" value="1"/>
</dbReference>
<dbReference type="Gene3D" id="3.30.70.80">
    <property type="entry name" value="Peptidase S8 propeptide/proteinase inhibitor I9"/>
    <property type="match status" value="1"/>
</dbReference>
<dbReference type="Gene3D" id="3.40.50.200">
    <property type="entry name" value="Peptidase S8/S53 domain"/>
    <property type="match status" value="1"/>
</dbReference>
<dbReference type="InterPro" id="IPR034193">
    <property type="entry name" value="PCSK9_ProteinaseK-like"/>
</dbReference>
<dbReference type="InterPro" id="IPR000209">
    <property type="entry name" value="Peptidase_S8/S53_dom"/>
</dbReference>
<dbReference type="InterPro" id="IPR036852">
    <property type="entry name" value="Peptidase_S8/S53_dom_sf"/>
</dbReference>
<dbReference type="InterPro" id="IPR023827">
    <property type="entry name" value="Peptidase_S8_Asp-AS"/>
</dbReference>
<dbReference type="InterPro" id="IPR022398">
    <property type="entry name" value="Peptidase_S8_His-AS"/>
</dbReference>
<dbReference type="InterPro" id="IPR023828">
    <property type="entry name" value="Peptidase_S8_Ser-AS"/>
</dbReference>
<dbReference type="InterPro" id="IPR050131">
    <property type="entry name" value="Peptidase_S8_subtilisin-like"/>
</dbReference>
<dbReference type="InterPro" id="IPR015500">
    <property type="entry name" value="Peptidase_S8_subtilisin-rel"/>
</dbReference>
<dbReference type="InterPro" id="IPR010259">
    <property type="entry name" value="S8pro/Inhibitor_I9"/>
</dbReference>
<dbReference type="InterPro" id="IPR037045">
    <property type="entry name" value="S8pro/Inhibitor_I9_sf"/>
</dbReference>
<dbReference type="PANTHER" id="PTHR43806:SF58">
    <property type="entry name" value="ALKALINE PROTEASE 1-RELATED"/>
    <property type="match status" value="1"/>
</dbReference>
<dbReference type="PANTHER" id="PTHR43806">
    <property type="entry name" value="PEPTIDASE S8"/>
    <property type="match status" value="1"/>
</dbReference>
<dbReference type="Pfam" id="PF05922">
    <property type="entry name" value="Inhibitor_I9"/>
    <property type="match status" value="1"/>
</dbReference>
<dbReference type="Pfam" id="PF00082">
    <property type="entry name" value="Peptidase_S8"/>
    <property type="match status" value="1"/>
</dbReference>
<dbReference type="PRINTS" id="PR00723">
    <property type="entry name" value="SUBTILISIN"/>
</dbReference>
<dbReference type="SUPFAM" id="SSF54897">
    <property type="entry name" value="Protease propeptides/inhibitors"/>
    <property type="match status" value="1"/>
</dbReference>
<dbReference type="SUPFAM" id="SSF52743">
    <property type="entry name" value="Subtilisin-like"/>
    <property type="match status" value="1"/>
</dbReference>
<dbReference type="PROSITE" id="PS51892">
    <property type="entry name" value="SUBTILASE"/>
    <property type="match status" value="1"/>
</dbReference>
<dbReference type="PROSITE" id="PS00136">
    <property type="entry name" value="SUBTILASE_ASP"/>
    <property type="match status" value="1"/>
</dbReference>
<dbReference type="PROSITE" id="PS00137">
    <property type="entry name" value="SUBTILASE_HIS"/>
    <property type="match status" value="1"/>
</dbReference>
<dbReference type="PROSITE" id="PS00138">
    <property type="entry name" value="SUBTILASE_SER"/>
    <property type="match status" value="1"/>
</dbReference>